<accession>Q1QEC2</accession>
<comment type="function">
    <text evidence="1">Catalyzes both the ATP-dependent activation of exogenously supplied lipoate to lipoyl-AMP and the transfer of the activated lipoyl onto the lipoyl domains of lipoate-dependent enzymes.</text>
</comment>
<comment type="catalytic activity">
    <reaction evidence="1">
        <text>L-lysyl-[lipoyl-carrier protein] + (R)-lipoate + ATP = N(6)-[(R)-lipoyl]-L-lysyl-[lipoyl-carrier protein] + AMP + diphosphate + H(+)</text>
        <dbReference type="Rhea" id="RHEA:49288"/>
        <dbReference type="Rhea" id="RHEA-COMP:10500"/>
        <dbReference type="Rhea" id="RHEA-COMP:10502"/>
        <dbReference type="ChEBI" id="CHEBI:15378"/>
        <dbReference type="ChEBI" id="CHEBI:29969"/>
        <dbReference type="ChEBI" id="CHEBI:30616"/>
        <dbReference type="ChEBI" id="CHEBI:33019"/>
        <dbReference type="ChEBI" id="CHEBI:83088"/>
        <dbReference type="ChEBI" id="CHEBI:83099"/>
        <dbReference type="ChEBI" id="CHEBI:456215"/>
        <dbReference type="EC" id="6.3.1.20"/>
    </reaction>
</comment>
<comment type="pathway">
    <text evidence="1">Protein modification; protein lipoylation via exogenous pathway; protein N(6)-(lipoyl)lysine from lipoate: step 1/2.</text>
</comment>
<comment type="pathway">
    <text evidence="1">Protein modification; protein lipoylation via exogenous pathway; protein N(6)-(lipoyl)lysine from lipoate: step 2/2.</text>
</comment>
<comment type="subunit">
    <text evidence="1">Monomer.</text>
</comment>
<comment type="subcellular location">
    <subcellularLocation>
        <location evidence="1">Cytoplasm</location>
    </subcellularLocation>
</comment>
<comment type="miscellaneous">
    <text evidence="1">In the transfer reaction, the free carboxyl group of lipoic acid is attached via an amide linkage to the epsilon-amino group of a specific lysine residue of lipoyl domains of lipoate-dependent enzymes.</text>
</comment>
<comment type="similarity">
    <text evidence="1">Belongs to the LplA family.</text>
</comment>
<dbReference type="EC" id="6.3.1.20" evidence="1"/>
<dbReference type="EMBL" id="CP000323">
    <property type="protein sequence ID" value="ABE73981.1"/>
    <property type="molecule type" value="Genomic_DNA"/>
</dbReference>
<dbReference type="RefSeq" id="WP_011512570.1">
    <property type="nucleotide sequence ID" value="NC_007969.1"/>
</dbReference>
<dbReference type="SMR" id="Q1QEC2"/>
<dbReference type="STRING" id="335284.Pcryo_0197"/>
<dbReference type="KEGG" id="pcr:Pcryo_0197"/>
<dbReference type="eggNOG" id="COG0095">
    <property type="taxonomic scope" value="Bacteria"/>
</dbReference>
<dbReference type="HOGENOM" id="CLU_022986_0_1_6"/>
<dbReference type="UniPathway" id="UPA00537">
    <property type="reaction ID" value="UER00594"/>
</dbReference>
<dbReference type="UniPathway" id="UPA00537">
    <property type="reaction ID" value="UER00595"/>
</dbReference>
<dbReference type="Proteomes" id="UP000002425">
    <property type="component" value="Chromosome"/>
</dbReference>
<dbReference type="GO" id="GO:0005737">
    <property type="term" value="C:cytoplasm"/>
    <property type="evidence" value="ECO:0007669"/>
    <property type="project" value="UniProtKB-SubCell"/>
</dbReference>
<dbReference type="GO" id="GO:0005524">
    <property type="term" value="F:ATP binding"/>
    <property type="evidence" value="ECO:0007669"/>
    <property type="project" value="UniProtKB-KW"/>
</dbReference>
<dbReference type="GO" id="GO:0016979">
    <property type="term" value="F:lipoate-protein ligase activity"/>
    <property type="evidence" value="ECO:0007669"/>
    <property type="project" value="UniProtKB-UniRule"/>
</dbReference>
<dbReference type="GO" id="GO:0017118">
    <property type="term" value="F:lipoyltransferase activity"/>
    <property type="evidence" value="ECO:0007669"/>
    <property type="project" value="TreeGrafter"/>
</dbReference>
<dbReference type="GO" id="GO:0036211">
    <property type="term" value="P:protein modification process"/>
    <property type="evidence" value="ECO:0007669"/>
    <property type="project" value="InterPro"/>
</dbReference>
<dbReference type="CDD" id="cd16443">
    <property type="entry name" value="LplA"/>
    <property type="match status" value="1"/>
</dbReference>
<dbReference type="Gene3D" id="3.30.930.10">
    <property type="entry name" value="Bira Bifunctional Protein, Domain 2"/>
    <property type="match status" value="1"/>
</dbReference>
<dbReference type="Gene3D" id="3.30.390.50">
    <property type="entry name" value="CO dehydrogenase flavoprotein, C-terminal domain"/>
    <property type="match status" value="1"/>
</dbReference>
<dbReference type="HAMAP" id="MF_01602">
    <property type="entry name" value="LplA"/>
    <property type="match status" value="1"/>
</dbReference>
<dbReference type="InterPro" id="IPR045864">
    <property type="entry name" value="aa-tRNA-synth_II/BPL/LPL"/>
</dbReference>
<dbReference type="InterPro" id="IPR004143">
    <property type="entry name" value="BPL_LPL_catalytic"/>
</dbReference>
<dbReference type="InterPro" id="IPR023741">
    <property type="entry name" value="Lipoate_ligase_A"/>
</dbReference>
<dbReference type="InterPro" id="IPR019491">
    <property type="entry name" value="Lipoate_protein_ligase_C"/>
</dbReference>
<dbReference type="InterPro" id="IPR004562">
    <property type="entry name" value="LipoylTrfase_LipoateP_Ligase"/>
</dbReference>
<dbReference type="NCBIfam" id="TIGR00545">
    <property type="entry name" value="lipoyltrans"/>
    <property type="match status" value="1"/>
</dbReference>
<dbReference type="PANTHER" id="PTHR12561">
    <property type="entry name" value="LIPOATE-PROTEIN LIGASE"/>
    <property type="match status" value="1"/>
</dbReference>
<dbReference type="PANTHER" id="PTHR12561:SF3">
    <property type="entry name" value="LIPOYLTRANSFERASE 1, MITOCHONDRIAL"/>
    <property type="match status" value="1"/>
</dbReference>
<dbReference type="Pfam" id="PF10437">
    <property type="entry name" value="Lip_prot_lig_C"/>
    <property type="match status" value="1"/>
</dbReference>
<dbReference type="Pfam" id="PF21948">
    <property type="entry name" value="LplA-B_cat"/>
    <property type="match status" value="1"/>
</dbReference>
<dbReference type="SUPFAM" id="SSF55681">
    <property type="entry name" value="Class II aaRS and biotin synthetases"/>
    <property type="match status" value="1"/>
</dbReference>
<dbReference type="SUPFAM" id="SSF82649">
    <property type="entry name" value="SufE/NifU"/>
    <property type="match status" value="1"/>
</dbReference>
<dbReference type="PROSITE" id="PS51733">
    <property type="entry name" value="BPL_LPL_CATALYTIC"/>
    <property type="match status" value="1"/>
</dbReference>
<evidence type="ECO:0000255" key="1">
    <source>
        <dbReference type="HAMAP-Rule" id="MF_01602"/>
    </source>
</evidence>
<evidence type="ECO:0000255" key="2">
    <source>
        <dbReference type="PROSITE-ProRule" id="PRU01067"/>
    </source>
</evidence>
<feature type="chain" id="PRO_0000311126" description="Lipoate-protein ligase A">
    <location>
        <begin position="1"/>
        <end position="339"/>
    </location>
</feature>
<feature type="domain" description="BPL/LPL catalytic" evidence="2">
    <location>
        <begin position="28"/>
        <end position="211"/>
    </location>
</feature>
<feature type="binding site" evidence="1">
    <location>
        <position position="70"/>
    </location>
    <ligand>
        <name>ATP</name>
        <dbReference type="ChEBI" id="CHEBI:30616"/>
    </ligand>
</feature>
<feature type="binding site" evidence="1">
    <location>
        <begin position="75"/>
        <end position="78"/>
    </location>
    <ligand>
        <name>ATP</name>
        <dbReference type="ChEBI" id="CHEBI:30616"/>
    </ligand>
</feature>
<feature type="binding site" evidence="1">
    <location>
        <position position="129"/>
    </location>
    <ligand>
        <name>(R)-lipoate</name>
        <dbReference type="ChEBI" id="CHEBI:83088"/>
    </ligand>
</feature>
<feature type="binding site" evidence="1">
    <location>
        <position position="129"/>
    </location>
    <ligand>
        <name>ATP</name>
        <dbReference type="ChEBI" id="CHEBI:30616"/>
    </ligand>
</feature>
<gene>
    <name evidence="1" type="primary">lplA</name>
    <name type="ordered locus">Pcryo_0197</name>
</gene>
<protein>
    <recommendedName>
        <fullName evidence="1">Lipoate-protein ligase A</fullName>
        <ecNumber evidence="1">6.3.1.20</ecNumber>
    </recommendedName>
    <alternativeName>
        <fullName evidence="1">Lipoate--protein ligase</fullName>
    </alternativeName>
</protein>
<sequence length="339" mass="38722">MKLRILKSAVTNPWFNLATEDWIFNTLNPDSHTLFLWRNSETVVIGRSQNPWVECKIDKMEADDVFLARRQSGGGAVFHDLGNTNFTFLSPKDDYDQAANFTIIINALKKLGIDADLSGRNDMQVGDKKISGSAFKHTADRSFHHGTLLVNANMQKLGDYLNPHPLKLKAKGIKSVRARVANLVEFNEDINHETLSDAIIEAFREYYRDTDYGDTAPVEELDEASLAKQPNLNKYYQQMADWDWRFGKTPEFTHHIETRFNWGIIDLHLDVKQAAIREVVIFSDALNVELIDLLKESLADVKYDKHDIKAKFDELNRAHPELAAQIDDVSEWLIGEMEG</sequence>
<reference key="1">
    <citation type="submission" date="2006-03" db="EMBL/GenBank/DDBJ databases">
        <title>Complete sequence of chromosome of Psychrobacter cryohalolentis K5.</title>
        <authorList>
            <consortium name="US DOE Joint Genome Institute"/>
            <person name="Copeland A."/>
            <person name="Lucas S."/>
            <person name="Lapidus A."/>
            <person name="Barry K."/>
            <person name="Detter J.C."/>
            <person name="Glavina T."/>
            <person name="Hammon N."/>
            <person name="Israni S."/>
            <person name="Dalin E."/>
            <person name="Tice H."/>
            <person name="Pitluck S."/>
            <person name="Brettin T."/>
            <person name="Bruce D."/>
            <person name="Han C."/>
            <person name="Tapia R."/>
            <person name="Sims D.R."/>
            <person name="Gilna P."/>
            <person name="Schmutz J."/>
            <person name="Larimer F."/>
            <person name="Land M."/>
            <person name="Hauser L."/>
            <person name="Kyrpides N."/>
            <person name="Kim E."/>
            <person name="Richardson P."/>
        </authorList>
    </citation>
    <scope>NUCLEOTIDE SEQUENCE [LARGE SCALE GENOMIC DNA]</scope>
    <source>
        <strain>ATCC BAA-1226 / DSM 17306 / VKM B-2378 / K5</strain>
    </source>
</reference>
<name>LPLA_PSYCK</name>
<proteinExistence type="inferred from homology"/>
<keyword id="KW-0067">ATP-binding</keyword>
<keyword id="KW-0963">Cytoplasm</keyword>
<keyword id="KW-0436">Ligase</keyword>
<keyword id="KW-0547">Nucleotide-binding</keyword>
<organism>
    <name type="scientific">Psychrobacter cryohalolentis (strain ATCC BAA-1226 / DSM 17306 / VKM B-2378 / K5)</name>
    <dbReference type="NCBI Taxonomy" id="335284"/>
    <lineage>
        <taxon>Bacteria</taxon>
        <taxon>Pseudomonadati</taxon>
        <taxon>Pseudomonadota</taxon>
        <taxon>Gammaproteobacteria</taxon>
        <taxon>Moraxellales</taxon>
        <taxon>Moraxellaceae</taxon>
        <taxon>Psychrobacter</taxon>
    </lineage>
</organism>